<dbReference type="EC" id="6.5.1.1" evidence="1"/>
<dbReference type="EMBL" id="CP000077">
    <property type="protein sequence ID" value="AAY80158.1"/>
    <property type="molecule type" value="Genomic_DNA"/>
</dbReference>
<dbReference type="RefSeq" id="WP_011277660.1">
    <property type="nucleotide sequence ID" value="NC_007181.1"/>
</dbReference>
<dbReference type="SMR" id="Q4JAM1"/>
<dbReference type="STRING" id="330779.Saci_0788"/>
<dbReference type="GeneID" id="14551303"/>
<dbReference type="KEGG" id="sai:Saci_0788"/>
<dbReference type="PATRIC" id="fig|330779.12.peg.755"/>
<dbReference type="eggNOG" id="arCOG01347">
    <property type="taxonomic scope" value="Archaea"/>
</dbReference>
<dbReference type="HOGENOM" id="CLU_005138_6_0_2"/>
<dbReference type="Proteomes" id="UP000001018">
    <property type="component" value="Chromosome"/>
</dbReference>
<dbReference type="GO" id="GO:0005524">
    <property type="term" value="F:ATP binding"/>
    <property type="evidence" value="ECO:0007669"/>
    <property type="project" value="UniProtKB-UniRule"/>
</dbReference>
<dbReference type="GO" id="GO:0003677">
    <property type="term" value="F:DNA binding"/>
    <property type="evidence" value="ECO:0007669"/>
    <property type="project" value="InterPro"/>
</dbReference>
<dbReference type="GO" id="GO:0003910">
    <property type="term" value="F:DNA ligase (ATP) activity"/>
    <property type="evidence" value="ECO:0007669"/>
    <property type="project" value="UniProtKB-UniRule"/>
</dbReference>
<dbReference type="GO" id="GO:0046872">
    <property type="term" value="F:metal ion binding"/>
    <property type="evidence" value="ECO:0007669"/>
    <property type="project" value="UniProtKB-KW"/>
</dbReference>
<dbReference type="GO" id="GO:0051301">
    <property type="term" value="P:cell division"/>
    <property type="evidence" value="ECO:0007669"/>
    <property type="project" value="UniProtKB-KW"/>
</dbReference>
<dbReference type="GO" id="GO:0071897">
    <property type="term" value="P:DNA biosynthetic process"/>
    <property type="evidence" value="ECO:0007669"/>
    <property type="project" value="InterPro"/>
</dbReference>
<dbReference type="GO" id="GO:0006310">
    <property type="term" value="P:DNA recombination"/>
    <property type="evidence" value="ECO:0007669"/>
    <property type="project" value="UniProtKB-UniRule"/>
</dbReference>
<dbReference type="GO" id="GO:0006281">
    <property type="term" value="P:DNA repair"/>
    <property type="evidence" value="ECO:0007669"/>
    <property type="project" value="UniProtKB-UniRule"/>
</dbReference>
<dbReference type="GO" id="GO:0006273">
    <property type="term" value="P:lagging strand elongation"/>
    <property type="evidence" value="ECO:0007669"/>
    <property type="project" value="TreeGrafter"/>
</dbReference>
<dbReference type="CDD" id="cd07901">
    <property type="entry name" value="Adenylation_DNA_ligase_Arch_LigB"/>
    <property type="match status" value="1"/>
</dbReference>
<dbReference type="CDD" id="cd07969">
    <property type="entry name" value="OBF_DNA_ligase_I"/>
    <property type="match status" value="1"/>
</dbReference>
<dbReference type="FunFam" id="1.10.3260.10:FF:000007">
    <property type="entry name" value="DNA ligase"/>
    <property type="match status" value="1"/>
</dbReference>
<dbReference type="FunFam" id="2.40.50.140:FF:000062">
    <property type="entry name" value="DNA ligase"/>
    <property type="match status" value="1"/>
</dbReference>
<dbReference type="FunFam" id="3.30.470.30:FF:000012">
    <property type="entry name" value="Probable DNA ligase"/>
    <property type="match status" value="1"/>
</dbReference>
<dbReference type="Gene3D" id="1.10.3260.10">
    <property type="entry name" value="DNA ligase, ATP-dependent, N-terminal domain"/>
    <property type="match status" value="1"/>
</dbReference>
<dbReference type="Gene3D" id="3.30.470.30">
    <property type="entry name" value="DNA ligase/mRNA capping enzyme"/>
    <property type="match status" value="1"/>
</dbReference>
<dbReference type="Gene3D" id="2.40.50.140">
    <property type="entry name" value="Nucleic acid-binding proteins"/>
    <property type="match status" value="1"/>
</dbReference>
<dbReference type="HAMAP" id="MF_00407">
    <property type="entry name" value="DNA_ligase"/>
    <property type="match status" value="1"/>
</dbReference>
<dbReference type="InterPro" id="IPR050191">
    <property type="entry name" value="ATP-dep_DNA_ligase"/>
</dbReference>
<dbReference type="InterPro" id="IPR022865">
    <property type="entry name" value="DNA_ligae_ATP-dep_bac/arc"/>
</dbReference>
<dbReference type="InterPro" id="IPR000977">
    <property type="entry name" value="DNA_ligase_ATP-dep"/>
</dbReference>
<dbReference type="InterPro" id="IPR012309">
    <property type="entry name" value="DNA_ligase_ATP-dep_C"/>
</dbReference>
<dbReference type="InterPro" id="IPR012310">
    <property type="entry name" value="DNA_ligase_ATP-dep_cent"/>
</dbReference>
<dbReference type="InterPro" id="IPR016059">
    <property type="entry name" value="DNA_ligase_ATP-dep_CS"/>
</dbReference>
<dbReference type="InterPro" id="IPR012308">
    <property type="entry name" value="DNA_ligase_ATP-dep_N"/>
</dbReference>
<dbReference type="InterPro" id="IPR036599">
    <property type="entry name" value="DNA_ligase_N_sf"/>
</dbReference>
<dbReference type="InterPro" id="IPR012340">
    <property type="entry name" value="NA-bd_OB-fold"/>
</dbReference>
<dbReference type="NCBIfam" id="TIGR00574">
    <property type="entry name" value="dnl1"/>
    <property type="match status" value="1"/>
</dbReference>
<dbReference type="PANTHER" id="PTHR45674:SF4">
    <property type="entry name" value="DNA LIGASE 1"/>
    <property type="match status" value="1"/>
</dbReference>
<dbReference type="PANTHER" id="PTHR45674">
    <property type="entry name" value="DNA LIGASE 1/3 FAMILY MEMBER"/>
    <property type="match status" value="1"/>
</dbReference>
<dbReference type="Pfam" id="PF04679">
    <property type="entry name" value="DNA_ligase_A_C"/>
    <property type="match status" value="1"/>
</dbReference>
<dbReference type="Pfam" id="PF01068">
    <property type="entry name" value="DNA_ligase_A_M"/>
    <property type="match status" value="1"/>
</dbReference>
<dbReference type="Pfam" id="PF04675">
    <property type="entry name" value="DNA_ligase_A_N"/>
    <property type="match status" value="1"/>
</dbReference>
<dbReference type="SUPFAM" id="SSF117018">
    <property type="entry name" value="ATP-dependent DNA ligase DNA-binding domain"/>
    <property type="match status" value="1"/>
</dbReference>
<dbReference type="SUPFAM" id="SSF56091">
    <property type="entry name" value="DNA ligase/mRNA capping enzyme, catalytic domain"/>
    <property type="match status" value="1"/>
</dbReference>
<dbReference type="SUPFAM" id="SSF50249">
    <property type="entry name" value="Nucleic acid-binding proteins"/>
    <property type="match status" value="1"/>
</dbReference>
<dbReference type="PROSITE" id="PS00697">
    <property type="entry name" value="DNA_LIGASE_A1"/>
    <property type="match status" value="1"/>
</dbReference>
<dbReference type="PROSITE" id="PS00333">
    <property type="entry name" value="DNA_LIGASE_A2"/>
    <property type="match status" value="1"/>
</dbReference>
<dbReference type="PROSITE" id="PS50160">
    <property type="entry name" value="DNA_LIGASE_A3"/>
    <property type="match status" value="1"/>
</dbReference>
<accession>Q4JAM1</accession>
<sequence length="598" mass="67576">MEFKLIAEYFDRLEKISSRIQLTALLTDLLKKSDKDVIDKVIYITQGKLWPDFFEKPEIGLGEKLMIKALSVSTNIKEDEIEKQLRILGDLGEVAYKLKRTNSSQNVLSYLGSTKVTKLTVEEVYESLSKIALSEGEGSRDMKIRSLAGLLKKADPLEAKYIIRFIDGRLRVGIGDATIMDALANVFGGGTAARPLIERAYNLRADLGNIAKLLAENGIETIKSIKPEVGIPIRPMLAERLTDPSEILAKVGGKGIVDYKYDGERAQIHKKGEKVYIFSRRLENITRQYPDVVEYIKNSIKSNEVILEGEIVAIDKESGEILPFQNLMHRKRKNDIGEAIKEYPVNVYLFDLMYNDGEDYTQKPLPDRREKLEEIVTQNDIVKVADHKYIDKVNELVEYFHQAISDGTEGVIVKSIGKDSIYQAGARGFLWIKLKKDYQSEMADSVDLVIVGAFYGRGKRGGKLSSLLMAAYDPDKDTFYTVCKVASGFSDAELEEVQKMLSEAKLDKKDPRVESEIQPDIWVKPKYVAEIIGAEITLSPLHTCCKGVVSEEAGLSIRFPRFIRWRDDKSVEEATTPNEILEMYQSRLKKKVEDITET</sequence>
<protein>
    <recommendedName>
        <fullName evidence="1">DNA ligase</fullName>
        <ecNumber evidence="1">6.5.1.1</ecNumber>
    </recommendedName>
    <alternativeName>
        <fullName evidence="1">Polydeoxyribonucleotide synthase [ATP]</fullName>
    </alternativeName>
</protein>
<reference key="1">
    <citation type="journal article" date="2005" name="J. Bacteriol.">
        <title>The genome of Sulfolobus acidocaldarius, a model organism of the Crenarchaeota.</title>
        <authorList>
            <person name="Chen L."/>
            <person name="Bruegger K."/>
            <person name="Skovgaard M."/>
            <person name="Redder P."/>
            <person name="She Q."/>
            <person name="Torarinsson E."/>
            <person name="Greve B."/>
            <person name="Awayez M."/>
            <person name="Zibat A."/>
            <person name="Klenk H.-P."/>
            <person name="Garrett R.A."/>
        </authorList>
    </citation>
    <scope>NUCLEOTIDE SEQUENCE [LARGE SCALE GENOMIC DNA]</scope>
    <source>
        <strain>ATCC 33909 / DSM 639 / JCM 8929 / NBRC 15157 / NCIMB 11770</strain>
    </source>
</reference>
<organism>
    <name type="scientific">Sulfolobus acidocaldarius (strain ATCC 33909 / DSM 639 / JCM 8929 / NBRC 15157 / NCIMB 11770)</name>
    <dbReference type="NCBI Taxonomy" id="330779"/>
    <lineage>
        <taxon>Archaea</taxon>
        <taxon>Thermoproteota</taxon>
        <taxon>Thermoprotei</taxon>
        <taxon>Sulfolobales</taxon>
        <taxon>Sulfolobaceae</taxon>
        <taxon>Sulfolobus</taxon>
    </lineage>
</organism>
<keyword id="KW-0067">ATP-binding</keyword>
<keyword id="KW-0131">Cell cycle</keyword>
<keyword id="KW-0132">Cell division</keyword>
<keyword id="KW-0227">DNA damage</keyword>
<keyword id="KW-0233">DNA recombination</keyword>
<keyword id="KW-0234">DNA repair</keyword>
<keyword id="KW-0235">DNA replication</keyword>
<keyword id="KW-0436">Ligase</keyword>
<keyword id="KW-0460">Magnesium</keyword>
<keyword id="KW-0479">Metal-binding</keyword>
<keyword id="KW-0547">Nucleotide-binding</keyword>
<keyword id="KW-1185">Reference proteome</keyword>
<feature type="chain" id="PRO_0000059616" description="DNA ligase">
    <location>
        <begin position="1"/>
        <end position="598"/>
    </location>
</feature>
<feature type="active site" description="N6-AMP-lysine intermediate" evidence="1">
    <location>
        <position position="260"/>
    </location>
</feature>
<feature type="binding site" evidence="1">
    <location>
        <position position="258"/>
    </location>
    <ligand>
        <name>ATP</name>
        <dbReference type="ChEBI" id="CHEBI:30616"/>
    </ligand>
</feature>
<feature type="binding site" evidence="1">
    <location>
        <position position="265"/>
    </location>
    <ligand>
        <name>ATP</name>
        <dbReference type="ChEBI" id="CHEBI:30616"/>
    </ligand>
</feature>
<feature type="binding site" evidence="1">
    <location>
        <position position="280"/>
    </location>
    <ligand>
        <name>ATP</name>
        <dbReference type="ChEBI" id="CHEBI:30616"/>
    </ligand>
</feature>
<feature type="binding site" evidence="1">
    <location>
        <position position="310"/>
    </location>
    <ligand>
        <name>ATP</name>
        <dbReference type="ChEBI" id="CHEBI:30616"/>
    </ligand>
</feature>
<feature type="binding site" evidence="1">
    <location>
        <position position="350"/>
    </location>
    <ligand>
        <name>ATP</name>
        <dbReference type="ChEBI" id="CHEBI:30616"/>
    </ligand>
</feature>
<feature type="binding site" evidence="1">
    <location>
        <position position="427"/>
    </location>
    <ligand>
        <name>ATP</name>
        <dbReference type="ChEBI" id="CHEBI:30616"/>
    </ligand>
</feature>
<feature type="binding site" evidence="1">
    <location>
        <position position="433"/>
    </location>
    <ligand>
        <name>ATP</name>
        <dbReference type="ChEBI" id="CHEBI:30616"/>
    </ligand>
</feature>
<name>DNLI_SULAC</name>
<proteinExistence type="inferred from homology"/>
<comment type="function">
    <text evidence="1">DNA ligase that seals nicks in double-stranded DNA during DNA replication, DNA recombination and DNA repair.</text>
</comment>
<comment type="catalytic activity">
    <reaction evidence="1">
        <text>ATP + (deoxyribonucleotide)n-3'-hydroxyl + 5'-phospho-(deoxyribonucleotide)m = (deoxyribonucleotide)n+m + AMP + diphosphate.</text>
        <dbReference type="EC" id="6.5.1.1"/>
    </reaction>
</comment>
<comment type="cofactor">
    <cofactor evidence="1">
        <name>Mg(2+)</name>
        <dbReference type="ChEBI" id="CHEBI:18420"/>
    </cofactor>
</comment>
<comment type="similarity">
    <text evidence="1">Belongs to the ATP-dependent DNA ligase family.</text>
</comment>
<gene>
    <name evidence="1" type="primary">lig</name>
    <name type="ordered locus">Saci_0788</name>
</gene>
<evidence type="ECO:0000255" key="1">
    <source>
        <dbReference type="HAMAP-Rule" id="MF_00407"/>
    </source>
</evidence>